<keyword id="KW-1003">Cell membrane</keyword>
<keyword id="KW-0966">Cell projection</keyword>
<keyword id="KW-0969">Cilium</keyword>
<keyword id="KW-0217">Developmental protein</keyword>
<keyword id="KW-1015">Disulfide bond</keyword>
<keyword id="KW-0297">G-protein coupled receptor</keyword>
<keyword id="KW-0325">Glycoprotein</keyword>
<keyword id="KW-0472">Membrane</keyword>
<keyword id="KW-0675">Receptor</keyword>
<keyword id="KW-1185">Reference proteome</keyword>
<keyword id="KW-0807">Transducer</keyword>
<keyword id="KW-0812">Transmembrane</keyword>
<keyword id="KW-1133">Transmembrane helix</keyword>
<reference key="1">
    <citation type="submission" date="2008-06" db="EMBL/GenBank/DDBJ databases">
        <authorList>
            <consortium name="NIH - Xenopus Gene Collection (XGC) project"/>
        </authorList>
    </citation>
    <scope>NUCLEOTIDE SEQUENCE [LARGE SCALE MRNA]</scope>
    <source>
        <tissue>Testis</tissue>
    </source>
</reference>
<accession>B3DM66</accession>
<name>GP161_XENTR</name>
<proteinExistence type="evidence at transcript level"/>
<feature type="chain" id="PRO_0000379075" description="G-protein coupled receptor 161">
    <location>
        <begin position="1"/>
        <end position="518"/>
    </location>
</feature>
<feature type="topological domain" description="Extracellular" evidence="2">
    <location>
        <begin position="1"/>
        <end position="26"/>
    </location>
</feature>
<feature type="transmembrane region" description="Helical; Name=1" evidence="2">
    <location>
        <begin position="27"/>
        <end position="47"/>
    </location>
</feature>
<feature type="topological domain" description="Cytoplasmic" evidence="2">
    <location>
        <begin position="48"/>
        <end position="59"/>
    </location>
</feature>
<feature type="transmembrane region" description="Helical; Name=2" evidence="2">
    <location>
        <begin position="60"/>
        <end position="80"/>
    </location>
</feature>
<feature type="topological domain" description="Extracellular" evidence="2">
    <location>
        <begin position="81"/>
        <end position="97"/>
    </location>
</feature>
<feature type="transmembrane region" description="Helical; Name=3" evidence="2">
    <location>
        <begin position="98"/>
        <end position="118"/>
    </location>
</feature>
<feature type="topological domain" description="Cytoplasmic" evidence="2">
    <location>
        <begin position="119"/>
        <end position="138"/>
    </location>
</feature>
<feature type="transmembrane region" description="Helical; Name=4" evidence="2">
    <location>
        <begin position="139"/>
        <end position="159"/>
    </location>
</feature>
<feature type="topological domain" description="Extracellular" evidence="2">
    <location>
        <begin position="160"/>
        <end position="185"/>
    </location>
</feature>
<feature type="transmembrane region" description="Helical; Name=5" evidence="2">
    <location>
        <begin position="186"/>
        <end position="206"/>
    </location>
</feature>
<feature type="topological domain" description="Cytoplasmic" evidence="2">
    <location>
        <begin position="207"/>
        <end position="264"/>
    </location>
</feature>
<feature type="transmembrane region" description="Helical; Name=6" evidence="2">
    <location>
        <begin position="265"/>
        <end position="285"/>
    </location>
</feature>
<feature type="topological domain" description="Extracellular" evidence="2">
    <location>
        <begin position="286"/>
        <end position="301"/>
    </location>
</feature>
<feature type="transmembrane region" description="Helical; Name=7" evidence="2">
    <location>
        <begin position="302"/>
        <end position="322"/>
    </location>
</feature>
<feature type="topological domain" description="Cytoplasmic" evidence="2">
    <location>
        <begin position="323"/>
        <end position="518"/>
    </location>
</feature>
<feature type="region of interest" description="Disordered" evidence="4">
    <location>
        <begin position="429"/>
        <end position="448"/>
    </location>
</feature>
<feature type="compositionally biased region" description="Polar residues" evidence="4">
    <location>
        <begin position="439"/>
        <end position="448"/>
    </location>
</feature>
<feature type="glycosylation site" description="N-linked (GlcNAc...) asparagine" evidence="2">
    <location>
        <position position="2"/>
    </location>
</feature>
<feature type="glycosylation site" description="N-linked (GlcNAc...) asparagine" evidence="2">
    <location>
        <position position="96"/>
    </location>
</feature>
<feature type="disulfide bond" evidence="3">
    <location>
        <begin position="95"/>
        <end position="173"/>
    </location>
</feature>
<sequence length="518" mass="57516">MNSSSDGANEGAGAAADNGPTKVAESIAIIIIDILICLGNLVIVVTLYKKSYLLSLSNKFVFSLTFSNLLLSMLVLPFVVVSSILREWIFGVVWCNFSALLYMLISSASMLTLGIIAIDRYYAVLYPMVYPMKITGNRAVLALVYVWLHSLIGCLPPLFGWSTLEFDHFKWMCVAAWHKEAGYTAFWQVWCALLPFIVMMICYGFIFRVARIKARKIHCGTVIIVQEASQKNGRKNSSTSTSSSGSRKNGFSSIVYSANQCKALITILVVIGAFVLTWGPYMIVISTEALKGKNSVSPVLETLATWLSFTSAICHPLIYGLWNKTVRKELLGMCFGNRYRDPFHQQHRTSRMFSISNRITDLGLSPHLTALMARGTESEHQSTTTNTGFSCSNESGTDVMLLDDTSSDATQLHRVIYSRRKSSVTFEDEVEQKNDARTMPTQPTAPSESLESYAFNLAKAIEMDAKISLFGEDVFPSNVQALPGNSGINRNRINFIQKQRVQLQSIEEGNIETSKCDV</sequence>
<comment type="function">
    <text evidence="1">Key negative regulator of Shh signaling during neural tube development. Recruited to primary cilia and acts as a regulator of the PKA-dependent basal repression machinery in Shh signaling by increasing cAMP levels, leading to promote the PKA-dependent processing of gli3 into gli3r and repress the Shh signaling. In presence of shh, it is removed from primary cilia, preventing its activity and allowing activation of the Shh signaling (By similarity).</text>
</comment>
<comment type="subcellular location">
    <subcellularLocation>
        <location evidence="1">Cell projection</location>
        <location evidence="1">Cilium membrane</location>
        <topology evidence="1">Multi-pass membrane protein</topology>
    </subcellularLocation>
    <subcellularLocation>
        <location evidence="1">Cell membrane</location>
        <topology evidence="1">Multi-pass membrane protein</topology>
    </subcellularLocation>
    <text evidence="1">Mainly localizes to primary cilium and is removed from primary cilia in presence of shh.</text>
</comment>
<comment type="similarity">
    <text evidence="3">Belongs to the G-protein coupled receptor 1 family.</text>
</comment>
<evidence type="ECO:0000250" key="1"/>
<evidence type="ECO:0000255" key="2"/>
<evidence type="ECO:0000255" key="3">
    <source>
        <dbReference type="PROSITE-ProRule" id="PRU00521"/>
    </source>
</evidence>
<evidence type="ECO:0000256" key="4">
    <source>
        <dbReference type="SAM" id="MobiDB-lite"/>
    </source>
</evidence>
<dbReference type="EMBL" id="BC167720">
    <property type="protein sequence ID" value="AAI67720.1"/>
    <property type="molecule type" value="mRNA"/>
</dbReference>
<dbReference type="RefSeq" id="NP_001123848.1">
    <property type="nucleotide sequence ID" value="NM_001130376.1"/>
</dbReference>
<dbReference type="RefSeq" id="XP_031751601.1">
    <property type="nucleotide sequence ID" value="XM_031895741.1"/>
</dbReference>
<dbReference type="SMR" id="B3DM66"/>
<dbReference type="FunCoup" id="B3DM66">
    <property type="interactions" value="429"/>
</dbReference>
<dbReference type="STRING" id="8364.ENSXETP00000024790"/>
<dbReference type="GlyCosmos" id="B3DM66">
    <property type="glycosylation" value="2 sites, No reported glycans"/>
</dbReference>
<dbReference type="PaxDb" id="8364-ENSXETP00000005135"/>
<dbReference type="GeneID" id="100170613"/>
<dbReference type="KEGG" id="xtr:100170613"/>
<dbReference type="AGR" id="Xenbase:XB-GENE-1003408"/>
<dbReference type="CTD" id="23432"/>
<dbReference type="Xenbase" id="XB-GENE-1003408">
    <property type="gene designation" value="gpr161"/>
</dbReference>
<dbReference type="eggNOG" id="KOG3656">
    <property type="taxonomic scope" value="Eukaryota"/>
</dbReference>
<dbReference type="InParanoid" id="B3DM66"/>
<dbReference type="OMA" id="KRTCVAS"/>
<dbReference type="OrthoDB" id="5980076at2759"/>
<dbReference type="Reactome" id="R-XTR-5610787">
    <property type="pathway name" value="Hedgehog 'off' state"/>
</dbReference>
<dbReference type="Reactome" id="R-XTR-5632684">
    <property type="pathway name" value="Hedgehog 'on' state"/>
</dbReference>
<dbReference type="Proteomes" id="UP000008143">
    <property type="component" value="Chromosome 2"/>
</dbReference>
<dbReference type="Bgee" id="ENSXETG00000002410">
    <property type="expression patterns" value="Expressed in embryo and 16 other cell types or tissues"/>
</dbReference>
<dbReference type="GO" id="GO:0060170">
    <property type="term" value="C:ciliary membrane"/>
    <property type="evidence" value="ECO:0007669"/>
    <property type="project" value="UniProtKB-SubCell"/>
</dbReference>
<dbReference type="GO" id="GO:0005929">
    <property type="term" value="C:cilium"/>
    <property type="evidence" value="ECO:0000250"/>
    <property type="project" value="UniProtKB"/>
</dbReference>
<dbReference type="GO" id="GO:0055037">
    <property type="term" value="C:recycling endosome"/>
    <property type="evidence" value="ECO:0000250"/>
    <property type="project" value="UniProtKB"/>
</dbReference>
<dbReference type="GO" id="GO:0004930">
    <property type="term" value="F:G protein-coupled receptor activity"/>
    <property type="evidence" value="ECO:0000250"/>
    <property type="project" value="UniProtKB"/>
</dbReference>
<dbReference type="GO" id="GO:0007189">
    <property type="term" value="P:adenylate cyclase-activating G protein-coupled receptor signaling pathway"/>
    <property type="evidence" value="ECO:0000250"/>
    <property type="project" value="UniProtKB"/>
</dbReference>
<dbReference type="GO" id="GO:1901621">
    <property type="term" value="P:negative regulation of smoothened signaling pathway involved in dorsal/ventral neural tube patterning"/>
    <property type="evidence" value="ECO:0000250"/>
    <property type="project" value="UniProtKB"/>
</dbReference>
<dbReference type="CDD" id="cd15214">
    <property type="entry name" value="7tmA_GPR161"/>
    <property type="match status" value="1"/>
</dbReference>
<dbReference type="FunFam" id="1.20.1070.10:FF:000091">
    <property type="entry name" value="G-protein coupled receptor 161"/>
    <property type="match status" value="1"/>
</dbReference>
<dbReference type="Gene3D" id="1.20.1070.10">
    <property type="entry name" value="Rhodopsin 7-helix transmembrane proteins"/>
    <property type="match status" value="1"/>
</dbReference>
<dbReference type="InterPro" id="IPR000276">
    <property type="entry name" value="GPCR_Rhodpsn"/>
</dbReference>
<dbReference type="InterPro" id="IPR017452">
    <property type="entry name" value="GPCR_Rhodpsn_7TM"/>
</dbReference>
<dbReference type="PANTHER" id="PTHR22752">
    <property type="entry name" value="G PROTEIN-COUPLED RECEPTOR"/>
    <property type="match status" value="1"/>
</dbReference>
<dbReference type="PANTHER" id="PTHR22752:SF10">
    <property type="entry name" value="G-PROTEIN COUPLED RECEPTOR 161"/>
    <property type="match status" value="1"/>
</dbReference>
<dbReference type="Pfam" id="PF00001">
    <property type="entry name" value="7tm_1"/>
    <property type="match status" value="1"/>
</dbReference>
<dbReference type="PRINTS" id="PR00237">
    <property type="entry name" value="GPCRRHODOPSN"/>
</dbReference>
<dbReference type="SUPFAM" id="SSF81321">
    <property type="entry name" value="Family A G protein-coupled receptor-like"/>
    <property type="match status" value="1"/>
</dbReference>
<dbReference type="PROSITE" id="PS00237">
    <property type="entry name" value="G_PROTEIN_RECEP_F1_1"/>
    <property type="match status" value="1"/>
</dbReference>
<dbReference type="PROSITE" id="PS50262">
    <property type="entry name" value="G_PROTEIN_RECEP_F1_2"/>
    <property type="match status" value="1"/>
</dbReference>
<protein>
    <recommendedName>
        <fullName>G-protein coupled receptor 161</fullName>
    </recommendedName>
</protein>
<organism>
    <name type="scientific">Xenopus tropicalis</name>
    <name type="common">Western clawed frog</name>
    <name type="synonym">Silurana tropicalis</name>
    <dbReference type="NCBI Taxonomy" id="8364"/>
    <lineage>
        <taxon>Eukaryota</taxon>
        <taxon>Metazoa</taxon>
        <taxon>Chordata</taxon>
        <taxon>Craniata</taxon>
        <taxon>Vertebrata</taxon>
        <taxon>Euteleostomi</taxon>
        <taxon>Amphibia</taxon>
        <taxon>Batrachia</taxon>
        <taxon>Anura</taxon>
        <taxon>Pipoidea</taxon>
        <taxon>Pipidae</taxon>
        <taxon>Xenopodinae</taxon>
        <taxon>Xenopus</taxon>
        <taxon>Silurana</taxon>
    </lineage>
</organism>
<gene>
    <name type="primary">gpr161</name>
</gene>